<reference key="1">
    <citation type="journal article" date="2002" name="Nature">
        <title>The genome sequence of Schizosaccharomyces pombe.</title>
        <authorList>
            <person name="Wood V."/>
            <person name="Gwilliam R."/>
            <person name="Rajandream M.A."/>
            <person name="Lyne M.H."/>
            <person name="Lyne R."/>
            <person name="Stewart A."/>
            <person name="Sgouros J.G."/>
            <person name="Peat N."/>
            <person name="Hayles J."/>
            <person name="Baker S.G."/>
            <person name="Basham D."/>
            <person name="Bowman S."/>
            <person name="Brooks K."/>
            <person name="Brown D."/>
            <person name="Brown S."/>
            <person name="Chillingworth T."/>
            <person name="Churcher C.M."/>
            <person name="Collins M."/>
            <person name="Connor R."/>
            <person name="Cronin A."/>
            <person name="Davis P."/>
            <person name="Feltwell T."/>
            <person name="Fraser A."/>
            <person name="Gentles S."/>
            <person name="Goble A."/>
            <person name="Hamlin N."/>
            <person name="Harris D.E."/>
            <person name="Hidalgo J."/>
            <person name="Hodgson G."/>
            <person name="Holroyd S."/>
            <person name="Hornsby T."/>
            <person name="Howarth S."/>
            <person name="Huckle E.J."/>
            <person name="Hunt S."/>
            <person name="Jagels K."/>
            <person name="James K.D."/>
            <person name="Jones L."/>
            <person name="Jones M."/>
            <person name="Leather S."/>
            <person name="McDonald S."/>
            <person name="McLean J."/>
            <person name="Mooney P."/>
            <person name="Moule S."/>
            <person name="Mungall K.L."/>
            <person name="Murphy L.D."/>
            <person name="Niblett D."/>
            <person name="Odell C."/>
            <person name="Oliver K."/>
            <person name="O'Neil S."/>
            <person name="Pearson D."/>
            <person name="Quail M.A."/>
            <person name="Rabbinowitsch E."/>
            <person name="Rutherford K.M."/>
            <person name="Rutter S."/>
            <person name="Saunders D."/>
            <person name="Seeger K."/>
            <person name="Sharp S."/>
            <person name="Skelton J."/>
            <person name="Simmonds M.N."/>
            <person name="Squares R."/>
            <person name="Squares S."/>
            <person name="Stevens K."/>
            <person name="Taylor K."/>
            <person name="Taylor R.G."/>
            <person name="Tivey A."/>
            <person name="Walsh S.V."/>
            <person name="Warren T."/>
            <person name="Whitehead S."/>
            <person name="Woodward J.R."/>
            <person name="Volckaert G."/>
            <person name="Aert R."/>
            <person name="Robben J."/>
            <person name="Grymonprez B."/>
            <person name="Weltjens I."/>
            <person name="Vanstreels E."/>
            <person name="Rieger M."/>
            <person name="Schaefer M."/>
            <person name="Mueller-Auer S."/>
            <person name="Gabel C."/>
            <person name="Fuchs M."/>
            <person name="Duesterhoeft A."/>
            <person name="Fritzc C."/>
            <person name="Holzer E."/>
            <person name="Moestl D."/>
            <person name="Hilbert H."/>
            <person name="Borzym K."/>
            <person name="Langer I."/>
            <person name="Beck A."/>
            <person name="Lehrach H."/>
            <person name="Reinhardt R."/>
            <person name="Pohl T.M."/>
            <person name="Eger P."/>
            <person name="Zimmermann W."/>
            <person name="Wedler H."/>
            <person name="Wambutt R."/>
            <person name="Purnelle B."/>
            <person name="Goffeau A."/>
            <person name="Cadieu E."/>
            <person name="Dreano S."/>
            <person name="Gloux S."/>
            <person name="Lelaure V."/>
            <person name="Mottier S."/>
            <person name="Galibert F."/>
            <person name="Aves S.J."/>
            <person name="Xiang Z."/>
            <person name="Hunt C."/>
            <person name="Moore K."/>
            <person name="Hurst S.M."/>
            <person name="Lucas M."/>
            <person name="Rochet M."/>
            <person name="Gaillardin C."/>
            <person name="Tallada V.A."/>
            <person name="Garzon A."/>
            <person name="Thode G."/>
            <person name="Daga R.R."/>
            <person name="Cruzado L."/>
            <person name="Jimenez J."/>
            <person name="Sanchez M."/>
            <person name="del Rey F."/>
            <person name="Benito J."/>
            <person name="Dominguez A."/>
            <person name="Revuelta J.L."/>
            <person name="Moreno S."/>
            <person name="Armstrong J."/>
            <person name="Forsburg S.L."/>
            <person name="Cerutti L."/>
            <person name="Lowe T."/>
            <person name="McCombie W.R."/>
            <person name="Paulsen I."/>
            <person name="Potashkin J."/>
            <person name="Shpakovski G.V."/>
            <person name="Ussery D."/>
            <person name="Barrell B.G."/>
            <person name="Nurse P."/>
        </authorList>
    </citation>
    <scope>NUCLEOTIDE SEQUENCE [LARGE SCALE GENOMIC DNA]</scope>
    <source>
        <strain>972 / ATCC 24843</strain>
    </source>
</reference>
<reference key="2">
    <citation type="journal article" date="2006" name="Nat. Biotechnol.">
        <title>ORFeome cloning and global analysis of protein localization in the fission yeast Schizosaccharomyces pombe.</title>
        <authorList>
            <person name="Matsuyama A."/>
            <person name="Arai R."/>
            <person name="Yashiroda Y."/>
            <person name="Shirai A."/>
            <person name="Kamata A."/>
            <person name="Sekido S."/>
            <person name="Kobayashi Y."/>
            <person name="Hashimoto A."/>
            <person name="Hamamoto M."/>
            <person name="Hiraoka Y."/>
            <person name="Horinouchi S."/>
            <person name="Yoshida M."/>
        </authorList>
    </citation>
    <scope>SUBCELLULAR LOCATION [LARGE SCALE ANALYSIS]</scope>
</reference>
<evidence type="ECO:0000250" key="1">
    <source>
        <dbReference type="UniProtKB" id="P0C2H7"/>
    </source>
</evidence>
<evidence type="ECO:0000269" key="2">
    <source>
    </source>
</evidence>
<evidence type="ECO:0000305" key="3"/>
<comment type="function">
    <text evidence="1">Component of the ribosome, a large ribonucleoprotein complex responsible for the synthesis of proteins in the cell. The small ribosomal subunit (SSU) binds messenger RNAs (mRNAs) and translates the encoded message by selecting cognate aminoacyl-transfer RNA (tRNA) molecules. The large subunit (LSU) contains the ribosomal catalytic site termed the peptidyl transferase center (PTC), which catalyzes the formation of peptide bonds, thereby polymerizing the amino acids delivered by tRNAs into a polypeptide chain. The nascent polypeptides leave the ribosome through a tunnel in the LSU and interact with protein factors that function in enzymatic processing, targeting, and the membrane insertion of nascent chains at the exit of the ribosomal tunnel.</text>
</comment>
<comment type="subunit">
    <text evidence="1">Component of the large ribosomal subunit (LSU). Mature yeast ribosomes consist of a small (40S) and a large (60S) subunit. The 40S small subunit contains 1 molecule of ribosomal RNA (18S rRNA) and at least 33 different proteins. The large 60S subunit contains 3 rRNA molecules (25S, 5.8S and 5S rRNA) and at least 46 different proteins.</text>
</comment>
<comment type="subcellular location">
    <subcellularLocation>
        <location evidence="2">Cytoplasm</location>
    </subcellularLocation>
</comment>
<comment type="miscellaneous">
    <text>There are 2 genes for eL27 in S.pombe.</text>
</comment>
<comment type="similarity">
    <text evidence="3">Belongs to the eukaryotic ribosomal protein eL27 family.</text>
</comment>
<protein>
    <recommendedName>
        <fullName evidence="3">Large ribosomal subunit protein eL27B</fullName>
    </recommendedName>
    <alternativeName>
        <fullName>60S ribosomal protein L27-B</fullName>
    </alternativeName>
</protein>
<organism>
    <name type="scientific">Schizosaccharomyces pombe (strain 972 / ATCC 24843)</name>
    <name type="common">Fission yeast</name>
    <dbReference type="NCBI Taxonomy" id="284812"/>
    <lineage>
        <taxon>Eukaryota</taxon>
        <taxon>Fungi</taxon>
        <taxon>Dikarya</taxon>
        <taxon>Ascomycota</taxon>
        <taxon>Taphrinomycotina</taxon>
        <taxon>Schizosaccharomycetes</taxon>
        <taxon>Schizosaccharomycetales</taxon>
        <taxon>Schizosaccharomycetaceae</taxon>
        <taxon>Schizosaccharomyces</taxon>
    </lineage>
</organism>
<accession>O74538</accession>
<sequence>MVKILKPGKVALVTRGRFAGKKVVILQNVDQGSKSHPFGHAVVAGVERYPLKVTKSMGAKRIAKRSRVKPFIKVINYNHLMPTRYALELDNLKGLVTPTTFSEPSQRSAAKKTVKNTFEEKYQTGKSAWFFTPLRF</sequence>
<feature type="chain" id="PRO_0000126091" description="Large ribosomal subunit protein eL27B">
    <location>
        <begin position="1"/>
        <end position="136"/>
    </location>
</feature>
<gene>
    <name type="primary">rpl2702</name>
    <name type="synonym">rpl27b</name>
    <name type="ORF">SPCC74.05</name>
</gene>
<keyword id="KW-0963">Cytoplasm</keyword>
<keyword id="KW-1185">Reference proteome</keyword>
<keyword id="KW-0687">Ribonucleoprotein</keyword>
<keyword id="KW-0689">Ribosomal protein</keyword>
<name>RL27B_SCHPO</name>
<proteinExistence type="inferred from homology"/>
<dbReference type="EMBL" id="CU329672">
    <property type="protein sequence ID" value="CAA20835.1"/>
    <property type="molecule type" value="Genomic_DNA"/>
</dbReference>
<dbReference type="PIR" id="T41589">
    <property type="entry name" value="T41589"/>
</dbReference>
<dbReference type="RefSeq" id="NP_588378.1">
    <property type="nucleotide sequence ID" value="NM_001023369.2"/>
</dbReference>
<dbReference type="SMR" id="O74538"/>
<dbReference type="BioGRID" id="275902">
    <property type="interactions" value="12"/>
</dbReference>
<dbReference type="FunCoup" id="O74538">
    <property type="interactions" value="440"/>
</dbReference>
<dbReference type="IntAct" id="O74538">
    <property type="interactions" value="2"/>
</dbReference>
<dbReference type="MINT" id="O74538"/>
<dbReference type="STRING" id="284812.O74538"/>
<dbReference type="iPTMnet" id="O74538"/>
<dbReference type="PaxDb" id="4896-SPCC74.05.1"/>
<dbReference type="EnsemblFungi" id="SPCC74.05.1">
    <property type="protein sequence ID" value="SPCC74.05.1:pep"/>
    <property type="gene ID" value="SPCC74.05"/>
</dbReference>
<dbReference type="GeneID" id="2539336"/>
<dbReference type="KEGG" id="spo:2539336"/>
<dbReference type="PomBase" id="SPCC74.05">
    <property type="gene designation" value="rpl2702"/>
</dbReference>
<dbReference type="VEuPathDB" id="FungiDB:SPCC74.05"/>
<dbReference type="eggNOG" id="KOG3418">
    <property type="taxonomic scope" value="Eukaryota"/>
</dbReference>
<dbReference type="HOGENOM" id="CLU_067359_0_1_1"/>
<dbReference type="InParanoid" id="O74538"/>
<dbReference type="OMA" id="KMLNYNH"/>
<dbReference type="PhylomeDB" id="O74538"/>
<dbReference type="Reactome" id="R-SPO-156827">
    <property type="pathway name" value="L13a-mediated translational silencing of Ceruloplasmin expression"/>
</dbReference>
<dbReference type="Reactome" id="R-SPO-1799339">
    <property type="pathway name" value="SRP-dependent cotranslational protein targeting to membrane"/>
</dbReference>
<dbReference type="Reactome" id="R-SPO-72689">
    <property type="pathway name" value="Formation of a pool of free 40S subunits"/>
</dbReference>
<dbReference type="Reactome" id="R-SPO-72706">
    <property type="pathway name" value="GTP hydrolysis and joining of the 60S ribosomal subunit"/>
</dbReference>
<dbReference type="Reactome" id="R-SPO-975956">
    <property type="pathway name" value="Nonsense Mediated Decay (NMD) independent of the Exon Junction Complex (EJC)"/>
</dbReference>
<dbReference type="Reactome" id="R-SPO-975957">
    <property type="pathway name" value="Nonsense Mediated Decay (NMD) enhanced by the Exon Junction Complex (EJC)"/>
</dbReference>
<dbReference type="PRO" id="PR:O74538"/>
<dbReference type="Proteomes" id="UP000002485">
    <property type="component" value="Chromosome III"/>
</dbReference>
<dbReference type="GO" id="GO:0005829">
    <property type="term" value="C:cytosol"/>
    <property type="evidence" value="ECO:0007005"/>
    <property type="project" value="PomBase"/>
</dbReference>
<dbReference type="GO" id="GO:0022625">
    <property type="term" value="C:cytosolic large ribosomal subunit"/>
    <property type="evidence" value="ECO:0000318"/>
    <property type="project" value="GO_Central"/>
</dbReference>
<dbReference type="GO" id="GO:0030684">
    <property type="term" value="C:preribosome"/>
    <property type="evidence" value="ECO:0000314"/>
    <property type="project" value="PomBase"/>
</dbReference>
<dbReference type="GO" id="GO:0003735">
    <property type="term" value="F:structural constituent of ribosome"/>
    <property type="evidence" value="ECO:0000318"/>
    <property type="project" value="GO_Central"/>
</dbReference>
<dbReference type="GO" id="GO:0002181">
    <property type="term" value="P:cytoplasmic translation"/>
    <property type="evidence" value="ECO:0000266"/>
    <property type="project" value="PomBase"/>
</dbReference>
<dbReference type="CDD" id="cd06090">
    <property type="entry name" value="KOW_RPL27"/>
    <property type="match status" value="1"/>
</dbReference>
<dbReference type="FunFam" id="2.30.30.770:FF:000001">
    <property type="entry name" value="60S ribosomal protein L27"/>
    <property type="match status" value="1"/>
</dbReference>
<dbReference type="Gene3D" id="2.30.30.770">
    <property type="match status" value="1"/>
</dbReference>
<dbReference type="InterPro" id="IPR001141">
    <property type="entry name" value="Ribosomal_eL27"/>
</dbReference>
<dbReference type="InterPro" id="IPR018262">
    <property type="entry name" value="Ribosomal_eL27_CS"/>
</dbReference>
<dbReference type="InterPro" id="IPR041991">
    <property type="entry name" value="Ribosomal_eL27_KOW"/>
</dbReference>
<dbReference type="InterPro" id="IPR038655">
    <property type="entry name" value="Ribosomal_eL27_sf"/>
</dbReference>
<dbReference type="InterPro" id="IPR008991">
    <property type="entry name" value="Translation_prot_SH3-like_sf"/>
</dbReference>
<dbReference type="PANTHER" id="PTHR10497">
    <property type="entry name" value="60S RIBOSOMAL PROTEIN L27"/>
    <property type="match status" value="1"/>
</dbReference>
<dbReference type="Pfam" id="PF01777">
    <property type="entry name" value="Ribosomal_L27e"/>
    <property type="match status" value="1"/>
</dbReference>
<dbReference type="SUPFAM" id="SSF50104">
    <property type="entry name" value="Translation proteins SH3-like domain"/>
    <property type="match status" value="1"/>
</dbReference>
<dbReference type="PROSITE" id="PS01107">
    <property type="entry name" value="RIBOSOMAL_L27E"/>
    <property type="match status" value="1"/>
</dbReference>